<gene>
    <name type="primary">FAD7</name>
</gene>
<dbReference type="EC" id="1.14.19.-"/>
<dbReference type="EMBL" id="L22963">
    <property type="protein sequence ID" value="AAA61774.1"/>
    <property type="status" value="ALT_INIT"/>
    <property type="molecule type" value="mRNA"/>
</dbReference>
<dbReference type="PIR" id="PQ0812">
    <property type="entry name" value="PQ0812"/>
</dbReference>
<dbReference type="SMR" id="P48618"/>
<dbReference type="UniPathway" id="UPA00658"/>
<dbReference type="GO" id="GO:0031969">
    <property type="term" value="C:chloroplast membrane"/>
    <property type="evidence" value="ECO:0007669"/>
    <property type="project" value="UniProtKB-SubCell"/>
</dbReference>
<dbReference type="GO" id="GO:0016717">
    <property type="term" value="F:oxidoreductase activity, acting on paired donors, with oxidation of a pair of donors resulting in the reduction of molecular oxygen to two molecules of water"/>
    <property type="evidence" value="ECO:0007669"/>
    <property type="project" value="InterPro"/>
</dbReference>
<dbReference type="GO" id="GO:0006636">
    <property type="term" value="P:unsaturated fatty acid biosynthetic process"/>
    <property type="evidence" value="ECO:0007669"/>
    <property type="project" value="UniProtKB-UniPathway"/>
</dbReference>
<dbReference type="CDD" id="cd03507">
    <property type="entry name" value="Delta12-FADS-like"/>
    <property type="match status" value="1"/>
</dbReference>
<dbReference type="InterPro" id="IPR005804">
    <property type="entry name" value="FA_desaturase_dom"/>
</dbReference>
<dbReference type="InterPro" id="IPR021863">
    <property type="entry name" value="FAS_N"/>
</dbReference>
<dbReference type="InterPro" id="IPR012171">
    <property type="entry name" value="Fatty_acid_desaturase"/>
</dbReference>
<dbReference type="PANTHER" id="PTHR32100">
    <property type="entry name" value="OMEGA-6 FATTY ACID DESATURASE, CHLOROPLASTIC"/>
    <property type="match status" value="1"/>
</dbReference>
<dbReference type="Pfam" id="PF11960">
    <property type="entry name" value="DUF3474"/>
    <property type="match status" value="1"/>
</dbReference>
<dbReference type="Pfam" id="PF00487">
    <property type="entry name" value="FA_desaturase"/>
    <property type="match status" value="1"/>
</dbReference>
<keyword id="KW-0150">Chloroplast</keyword>
<keyword id="KW-0275">Fatty acid biosynthesis</keyword>
<keyword id="KW-0276">Fatty acid metabolism</keyword>
<keyword id="KW-0444">Lipid biosynthesis</keyword>
<keyword id="KW-0443">Lipid metabolism</keyword>
<keyword id="KW-0472">Membrane</keyword>
<keyword id="KW-0560">Oxidoreductase</keyword>
<keyword id="KW-0934">Plastid</keyword>
<keyword id="KW-0809">Transit peptide</keyword>
<evidence type="ECO:0000255" key="1"/>
<evidence type="ECO:0000256" key="2">
    <source>
        <dbReference type="SAM" id="MobiDB-lite"/>
    </source>
</evidence>
<evidence type="ECO:0000305" key="3"/>
<feature type="transit peptide" description="Chloroplast" evidence="1">
    <location>
        <begin position="1" status="less than"/>
        <end status="unknown"/>
    </location>
</feature>
<feature type="chain" id="PRO_0000007118" description="Omega-3 fatty acid desaturase, chloroplastic">
    <location>
        <begin status="unknown"/>
        <end position="404"/>
    </location>
</feature>
<feature type="region of interest" description="Disordered" evidence="2">
    <location>
        <begin position="28"/>
        <end position="50"/>
    </location>
</feature>
<feature type="short sequence motif" description="Histidine box-1">
    <location>
        <begin position="121"/>
        <end position="125"/>
    </location>
</feature>
<feature type="short sequence motif" description="Histidine box-2">
    <location>
        <begin position="157"/>
        <end position="161"/>
    </location>
</feature>
<feature type="short sequence motif" description="Histidine box-3">
    <location>
        <begin position="324"/>
        <end position="328"/>
    </location>
</feature>
<feature type="non-terminal residue">
    <location>
        <position position="1"/>
    </location>
</feature>
<proteinExistence type="evidence at transcript level"/>
<accession>P48618</accession>
<protein>
    <recommendedName>
        <fullName>Omega-3 fatty acid desaturase, chloroplastic</fullName>
        <ecNumber>1.14.19.-</ecNumber>
    </recommendedName>
</protein>
<sequence>FKFRQSPSSPRFRLNSRNWALNVTTPLTVDSSSSPPIEEEPKTQRFDPGAPPPFNLADIRAAIPKHCWVKNPWKSMSYVVRELAIVFALAAGAAYLNNWLVWPLYWIAQGTMFWALFVLGHDCGHGSFSNDPRLNSVVGHLLHSSILVPYHGWRISHRTHHQNHGHVENDESWHPMSEKIYKSLDKPTRFFRFTLPLVMLAYPFYLWARSPGKKGSHYHPDSDLFLPKERNDVLTSTACWTAMAVLLVCLNFVMGPMQMLKLYVIPYWINVMWLDFVTYLHHHGHEDKLPWYRGKEWSYLRGGLTTLDRDYGLINNIHHDIGTHVIHHLFPQIPHYHLVEATEAAKPVLGKYYREPDKSGPLPLHLLGILAKSIKEDHFVSDEGDVVYYEADPNLYGEIKVTAE</sequence>
<reference key="1">
    <citation type="journal article" date="1993" name="Plant Physiol.">
        <title>Cloning of higher plant omega-3 fatty acid desaturases.</title>
        <authorList>
            <person name="Yadav N.S."/>
            <person name="Wierzbicki A."/>
            <person name="Aegerter M."/>
            <person name="Caster C.S."/>
            <person name="Perez-Grau L."/>
            <person name="Kinney A.J."/>
            <person name="Hitz W.D."/>
            <person name="Booth J.R. Jr."/>
            <person name="Schweiger B."/>
            <person name="Stecca K.L."/>
            <person name="Allen S.M."/>
            <person name="Blackwell M."/>
            <person name="Reiter R.S."/>
            <person name="Carlson T.J."/>
            <person name="Russell S.H."/>
            <person name="Feldmann K.A."/>
            <person name="Pierce J."/>
            <person name="Browse J."/>
        </authorList>
    </citation>
    <scope>NUCLEOTIDE SEQUENCE [MRNA]</scope>
    <source>
        <tissue>Seed</tissue>
    </source>
</reference>
<comment type="function">
    <text>Chloroplast omega-3 fatty acid desaturase introduces the third double bond in the biosynthesis of 16:3 and 18:3 fatty acids, important constituents of plant membranes. It is thought to use ferredoxin as an electron donor and to act on fatty acids esterified to galactolipids, sulfolipids and phosphatidylglycerol.</text>
</comment>
<comment type="pathway">
    <text>Lipid metabolism; polyunsaturated fatty acid biosynthesis.</text>
</comment>
<comment type="subcellular location">
    <subcellularLocation>
        <location evidence="3">Plastid</location>
        <location evidence="3">Chloroplast membrane</location>
        <topology evidence="3">Peripheral membrane protein</topology>
    </subcellularLocation>
</comment>
<comment type="domain">
    <text>The histidine box domains may contain the active site and/or be involved in metal ion binding.</text>
</comment>
<comment type="similarity">
    <text evidence="3">Belongs to the fatty acid desaturase type 1 family.</text>
</comment>
<comment type="sequence caution" evidence="3">
    <conflict type="erroneous initiation">
        <sequence resource="EMBL-CDS" id="AAA61774"/>
    </conflict>
</comment>
<organism>
    <name type="scientific">Brassica napus</name>
    <name type="common">Rape</name>
    <dbReference type="NCBI Taxonomy" id="3708"/>
    <lineage>
        <taxon>Eukaryota</taxon>
        <taxon>Viridiplantae</taxon>
        <taxon>Streptophyta</taxon>
        <taxon>Embryophyta</taxon>
        <taxon>Tracheophyta</taxon>
        <taxon>Spermatophyta</taxon>
        <taxon>Magnoliopsida</taxon>
        <taxon>eudicotyledons</taxon>
        <taxon>Gunneridae</taxon>
        <taxon>Pentapetalae</taxon>
        <taxon>rosids</taxon>
        <taxon>malvids</taxon>
        <taxon>Brassicales</taxon>
        <taxon>Brassicaceae</taxon>
        <taxon>Brassiceae</taxon>
        <taxon>Brassica</taxon>
    </lineage>
</organism>
<name>FAD3C_BRANA</name>